<organism>
    <name type="scientific">Staphylococcus aureus (strain MSSA476)</name>
    <dbReference type="NCBI Taxonomy" id="282459"/>
    <lineage>
        <taxon>Bacteria</taxon>
        <taxon>Bacillati</taxon>
        <taxon>Bacillota</taxon>
        <taxon>Bacilli</taxon>
        <taxon>Bacillales</taxon>
        <taxon>Staphylococcaceae</taxon>
        <taxon>Staphylococcus</taxon>
    </lineage>
</organism>
<reference key="1">
    <citation type="journal article" date="2004" name="Proc. Natl. Acad. Sci. U.S.A.">
        <title>Complete genomes of two clinical Staphylococcus aureus strains: evidence for the rapid evolution of virulence and drug resistance.</title>
        <authorList>
            <person name="Holden M.T.G."/>
            <person name="Feil E.J."/>
            <person name="Lindsay J.A."/>
            <person name="Peacock S.J."/>
            <person name="Day N.P.J."/>
            <person name="Enright M.C."/>
            <person name="Foster T.J."/>
            <person name="Moore C.E."/>
            <person name="Hurst L."/>
            <person name="Atkin R."/>
            <person name="Barron A."/>
            <person name="Bason N."/>
            <person name="Bentley S.D."/>
            <person name="Chillingworth C."/>
            <person name="Chillingworth T."/>
            <person name="Churcher C."/>
            <person name="Clark L."/>
            <person name="Corton C."/>
            <person name="Cronin A."/>
            <person name="Doggett J."/>
            <person name="Dowd L."/>
            <person name="Feltwell T."/>
            <person name="Hance Z."/>
            <person name="Harris B."/>
            <person name="Hauser H."/>
            <person name="Holroyd S."/>
            <person name="Jagels K."/>
            <person name="James K.D."/>
            <person name="Lennard N."/>
            <person name="Line A."/>
            <person name="Mayes R."/>
            <person name="Moule S."/>
            <person name="Mungall K."/>
            <person name="Ormond D."/>
            <person name="Quail M.A."/>
            <person name="Rabbinowitsch E."/>
            <person name="Rutherford K.M."/>
            <person name="Sanders M."/>
            <person name="Sharp S."/>
            <person name="Simmonds M."/>
            <person name="Stevens K."/>
            <person name="Whitehead S."/>
            <person name="Barrell B.G."/>
            <person name="Spratt B.G."/>
            <person name="Parkhill J."/>
        </authorList>
    </citation>
    <scope>NUCLEOTIDE SEQUENCE [LARGE SCALE GENOMIC DNA]</scope>
    <source>
        <strain>MSSA476</strain>
    </source>
</reference>
<comment type="function">
    <text evidence="1">Catalyzes the conversion of heme O to heme A by two successive hydroxylations of the methyl group at C8. The first hydroxylation forms heme I, the second hydroxylation results in an unstable dihydroxymethyl group, which spontaneously dehydrates, resulting in the formyl group of heme A.</text>
</comment>
<comment type="catalytic activity">
    <reaction evidence="1">
        <text>Fe(II)-heme o + 2 A + H2O = Fe(II)-heme a + 2 AH2</text>
        <dbReference type="Rhea" id="RHEA:63388"/>
        <dbReference type="ChEBI" id="CHEBI:13193"/>
        <dbReference type="ChEBI" id="CHEBI:15377"/>
        <dbReference type="ChEBI" id="CHEBI:17499"/>
        <dbReference type="ChEBI" id="CHEBI:60530"/>
        <dbReference type="ChEBI" id="CHEBI:61715"/>
        <dbReference type="EC" id="1.17.99.9"/>
    </reaction>
    <physiologicalReaction direction="left-to-right" evidence="1">
        <dbReference type="Rhea" id="RHEA:63389"/>
    </physiologicalReaction>
</comment>
<comment type="cofactor">
    <cofactor evidence="1">
        <name>heme b</name>
        <dbReference type="ChEBI" id="CHEBI:60344"/>
    </cofactor>
</comment>
<comment type="pathway">
    <text evidence="1">Porphyrin-containing compound metabolism; heme A biosynthesis; heme A from heme O: step 1/1.</text>
</comment>
<comment type="subunit">
    <text evidence="1">Interacts with CtaB.</text>
</comment>
<comment type="subcellular location">
    <subcellularLocation>
        <location evidence="1">Cell membrane</location>
        <topology evidence="1">Multi-pass membrane protein</topology>
    </subcellularLocation>
</comment>
<comment type="domain">
    <text evidence="1">The N-half (TM1-TM4) and C-half (TM5-TM8) domains are connected by an intracellular loop. Each domain is formed from four-helix bundles and they align in a pseudo twofold symmetry manner. The N-half domain is the substrate-heme O binding domain and the C-half domain is the cofactor heme B binding domain.</text>
</comment>
<comment type="domain">
    <text evidence="1">The cysteines of disulfide bond Cys-37 and Cys-44 may be involved in transfer of reducing equivalents from quinol in the membrane to the active site of the enzyme.</text>
</comment>
<comment type="similarity">
    <text evidence="1">Belongs to the COX15/CtaA family. Type 1 subfamily.</text>
</comment>
<proteinExistence type="inferred from homology"/>
<dbReference type="EC" id="1.17.99.9" evidence="1"/>
<dbReference type="EMBL" id="BX571857">
    <property type="protein sequence ID" value="CAG42824.1"/>
    <property type="molecule type" value="Genomic_DNA"/>
</dbReference>
<dbReference type="RefSeq" id="WP_000467124.1">
    <property type="nucleotide sequence ID" value="NC_002953.3"/>
</dbReference>
<dbReference type="SMR" id="Q6GA99"/>
<dbReference type="KEGG" id="sas:SAS1050"/>
<dbReference type="HOGENOM" id="CLU_041525_3_1_9"/>
<dbReference type="UniPathway" id="UPA00269">
    <property type="reaction ID" value="UER00713"/>
</dbReference>
<dbReference type="GO" id="GO:0005886">
    <property type="term" value="C:plasma membrane"/>
    <property type="evidence" value="ECO:0007669"/>
    <property type="project" value="UniProtKB-SubCell"/>
</dbReference>
<dbReference type="GO" id="GO:0046872">
    <property type="term" value="F:metal ion binding"/>
    <property type="evidence" value="ECO:0007669"/>
    <property type="project" value="UniProtKB-KW"/>
</dbReference>
<dbReference type="GO" id="GO:0016653">
    <property type="term" value="F:oxidoreductase activity, acting on NAD(P)H, heme protein as acceptor"/>
    <property type="evidence" value="ECO:0007669"/>
    <property type="project" value="InterPro"/>
</dbReference>
<dbReference type="GO" id="GO:0006784">
    <property type="term" value="P:heme A biosynthetic process"/>
    <property type="evidence" value="ECO:0007669"/>
    <property type="project" value="UniProtKB-UniRule"/>
</dbReference>
<dbReference type="HAMAP" id="MF_01664">
    <property type="entry name" value="HemeA_synth_type1"/>
    <property type="match status" value="1"/>
</dbReference>
<dbReference type="InterPro" id="IPR003780">
    <property type="entry name" value="COX15/CtaA_fam"/>
</dbReference>
<dbReference type="InterPro" id="IPR050450">
    <property type="entry name" value="COX15/CtaA_HemeA_synthase"/>
</dbReference>
<dbReference type="InterPro" id="IPR023755">
    <property type="entry name" value="HemeA_Synthase_type1"/>
</dbReference>
<dbReference type="PANTHER" id="PTHR35457">
    <property type="entry name" value="HEME A SYNTHASE"/>
    <property type="match status" value="1"/>
</dbReference>
<dbReference type="PANTHER" id="PTHR35457:SF1">
    <property type="entry name" value="HEME A SYNTHASE"/>
    <property type="match status" value="1"/>
</dbReference>
<dbReference type="Pfam" id="PF02628">
    <property type="entry name" value="COX15-CtaA"/>
    <property type="match status" value="1"/>
</dbReference>
<accession>Q6GA99</accession>
<gene>
    <name evidence="1" type="primary">ctaA</name>
    <name type="ordered locus">SAS1050</name>
</gene>
<protein>
    <recommendedName>
        <fullName evidence="1">Heme A synthase</fullName>
        <shortName evidence="1">HAS</shortName>
        <ecNumber evidence="1">1.17.99.9</ecNumber>
    </recommendedName>
    <alternativeName>
        <fullName evidence="1">Cytochrome aa3-controlling protein</fullName>
    </alternativeName>
</protein>
<evidence type="ECO:0000255" key="1">
    <source>
        <dbReference type="HAMAP-Rule" id="MF_01664"/>
    </source>
</evidence>
<name>CTAA_STAAS</name>
<feature type="chain" id="PRO_0000348992" description="Heme A synthase">
    <location>
        <begin position="1"/>
        <end position="303"/>
    </location>
</feature>
<feature type="topological domain" description="Cytoplasmic" evidence="1">
    <location>
        <begin position="1"/>
        <end position="8"/>
    </location>
</feature>
<feature type="transmembrane region" description="Helical" evidence="1">
    <location>
        <begin position="9"/>
        <end position="29"/>
    </location>
</feature>
<feature type="topological domain" description="Extracellular" evidence="1">
    <location>
        <begin position="30"/>
        <end position="67"/>
    </location>
</feature>
<feature type="transmembrane region" description="Helical" evidence="1">
    <location>
        <begin position="68"/>
        <end position="88"/>
    </location>
</feature>
<feature type="topological domain" description="Cytoplasmic" evidence="1">
    <location>
        <begin position="89"/>
        <end position="93"/>
    </location>
</feature>
<feature type="transmembrane region" description="Helical" evidence="1">
    <location>
        <begin position="94"/>
        <end position="114"/>
    </location>
</feature>
<feature type="topological domain" description="Extracellular" evidence="1">
    <location>
        <begin position="115"/>
        <end position="125"/>
    </location>
</feature>
<feature type="transmembrane region" description="Helical" evidence="1">
    <location>
        <begin position="126"/>
        <end position="146"/>
    </location>
</feature>
<feature type="topological domain" description="Cytoplasmic" evidence="1">
    <location>
        <begin position="147"/>
        <end position="163"/>
    </location>
</feature>
<feature type="transmembrane region" description="Helical" evidence="1">
    <location>
        <begin position="164"/>
        <end position="184"/>
    </location>
</feature>
<feature type="topological domain" description="Extracellular" evidence="1">
    <location>
        <begin position="185"/>
        <end position="215"/>
    </location>
</feature>
<feature type="transmembrane region" description="Helical" evidence="1">
    <location>
        <begin position="216"/>
        <end position="236"/>
    </location>
</feature>
<feature type="topological domain" description="Cytoplasmic" evidence="1">
    <location>
        <begin position="237"/>
        <end position="244"/>
    </location>
</feature>
<feature type="transmembrane region" description="Helical" evidence="1">
    <location>
        <begin position="245"/>
        <end position="265"/>
    </location>
</feature>
<feature type="topological domain" description="Extracellular" evidence="1">
    <location>
        <begin position="266"/>
        <end position="270"/>
    </location>
</feature>
<feature type="transmembrane region" description="Helical" evidence="1">
    <location>
        <begin position="271"/>
        <end position="291"/>
    </location>
</feature>
<feature type="topological domain" description="Cytoplasmic" evidence="1">
    <location>
        <begin position="292"/>
        <end position="303"/>
    </location>
</feature>
<feature type="active site" evidence="1">
    <location>
        <position position="60"/>
    </location>
</feature>
<feature type="binding site" description="axial binding residue" evidence="1">
    <location>
        <position position="63"/>
    </location>
    <ligand>
        <name>heme o</name>
        <dbReference type="ChEBI" id="CHEBI:24480"/>
    </ligand>
    <ligandPart>
        <name>Fe</name>
        <dbReference type="ChEBI" id="CHEBI:18248"/>
    </ligandPart>
</feature>
<feature type="binding site" description="axial binding residue" evidence="1">
    <location>
        <position position="125"/>
    </location>
    <ligand>
        <name>heme o</name>
        <dbReference type="ChEBI" id="CHEBI:24480"/>
    </ligand>
    <ligandPart>
        <name>Fe</name>
        <dbReference type="ChEBI" id="CHEBI:18248"/>
    </ligandPart>
</feature>
<feature type="binding site" description="axial binding residue" evidence="1">
    <location>
        <position position="214"/>
    </location>
    <ligand>
        <name>heme b</name>
        <dbReference type="ChEBI" id="CHEBI:60344"/>
    </ligand>
    <ligandPart>
        <name>Fe</name>
        <dbReference type="ChEBI" id="CHEBI:18248"/>
    </ligandPart>
</feature>
<feature type="binding site" description="axial binding residue" evidence="1">
    <location>
        <position position="276"/>
    </location>
    <ligand>
        <name>heme b</name>
        <dbReference type="ChEBI" id="CHEBI:60344"/>
    </ligand>
    <ligandPart>
        <name>Fe</name>
        <dbReference type="ChEBI" id="CHEBI:18248"/>
    </ligandPart>
</feature>
<feature type="disulfide bond" description="Essential for catalytic activity" evidence="1">
    <location>
        <begin position="37"/>
        <end position="44"/>
    </location>
</feature>
<sequence length="303" mass="34060">MFGKKNLKWLGVVATLMMTFVQLGGALVTKTGSADGCGSSWPLCHGALIPEFFPIDTIIELSHRAVSALSLLMVLWLVITAWKHIGYIKEIKPLSIISVGFLLLQALIGAAAVIWQQNDYVLALHFGISLISFSSVFLITLIIFSIDQKYEADELYIKKPLRRLTWLMAIIIYCGVYTGALVRHADASLAYGGWPLPFHDLVPHSEQDWVQLTHRIMAFIVFTIIMITYIHAVKNYPNNRTVHYGYTAAFILVILQVITGALSIMTNVNLLIALFHALFITYLFGMTTYFIMLMLRSVRSDKQ</sequence>
<keyword id="KW-1003">Cell membrane</keyword>
<keyword id="KW-1015">Disulfide bond</keyword>
<keyword id="KW-0350">Heme biosynthesis</keyword>
<keyword id="KW-0408">Iron</keyword>
<keyword id="KW-0472">Membrane</keyword>
<keyword id="KW-0479">Metal-binding</keyword>
<keyword id="KW-0560">Oxidoreductase</keyword>
<keyword id="KW-0812">Transmembrane</keyword>
<keyword id="KW-1133">Transmembrane helix</keyword>